<accession>Q92HF5</accession>
<organism>
    <name type="scientific">Rickettsia conorii (strain ATCC VR-613 / Malish 7)</name>
    <dbReference type="NCBI Taxonomy" id="272944"/>
    <lineage>
        <taxon>Bacteria</taxon>
        <taxon>Pseudomonadati</taxon>
        <taxon>Pseudomonadota</taxon>
        <taxon>Alphaproteobacteria</taxon>
        <taxon>Rickettsiales</taxon>
        <taxon>Rickettsiaceae</taxon>
        <taxon>Rickettsieae</taxon>
        <taxon>Rickettsia</taxon>
        <taxon>spotted fever group</taxon>
    </lineage>
</organism>
<dbReference type="EMBL" id="AE006914">
    <property type="protein sequence ID" value="AAL03354.1"/>
    <property type="molecule type" value="Genomic_DNA"/>
</dbReference>
<dbReference type="PIR" id="H97801">
    <property type="entry name" value="H97801"/>
</dbReference>
<dbReference type="RefSeq" id="WP_010977425.1">
    <property type="nucleotide sequence ID" value="NC_003103.1"/>
</dbReference>
<dbReference type="SMR" id="Q92HF5"/>
<dbReference type="GeneID" id="927778"/>
<dbReference type="KEGG" id="rco:RC0816"/>
<dbReference type="PATRIC" id="fig|272944.4.peg.926"/>
<dbReference type="HOGENOM" id="CLU_006301_10_2_5"/>
<dbReference type="Proteomes" id="UP000000816">
    <property type="component" value="Chromosome"/>
</dbReference>
<dbReference type="GO" id="GO:0005737">
    <property type="term" value="C:cytoplasm"/>
    <property type="evidence" value="ECO:0007669"/>
    <property type="project" value="UniProtKB-SubCell"/>
</dbReference>
<dbReference type="GO" id="GO:0005525">
    <property type="term" value="F:GTP binding"/>
    <property type="evidence" value="ECO:0007669"/>
    <property type="project" value="UniProtKB-KW"/>
</dbReference>
<dbReference type="GO" id="GO:0003924">
    <property type="term" value="F:GTPase activity"/>
    <property type="evidence" value="ECO:0007669"/>
    <property type="project" value="UniProtKB-UniRule"/>
</dbReference>
<dbReference type="GO" id="GO:0097216">
    <property type="term" value="F:guanosine tetraphosphate binding"/>
    <property type="evidence" value="ECO:0007669"/>
    <property type="project" value="UniProtKB-ARBA"/>
</dbReference>
<dbReference type="GO" id="GO:0003743">
    <property type="term" value="F:translation initiation factor activity"/>
    <property type="evidence" value="ECO:0007669"/>
    <property type="project" value="UniProtKB-UniRule"/>
</dbReference>
<dbReference type="CDD" id="cd01887">
    <property type="entry name" value="IF2_eIF5B"/>
    <property type="match status" value="1"/>
</dbReference>
<dbReference type="CDD" id="cd03702">
    <property type="entry name" value="IF2_mtIF2_II"/>
    <property type="match status" value="1"/>
</dbReference>
<dbReference type="CDD" id="cd03692">
    <property type="entry name" value="mtIF2_IVc"/>
    <property type="match status" value="1"/>
</dbReference>
<dbReference type="FunFam" id="2.40.30.10:FF:000008">
    <property type="entry name" value="Translation initiation factor IF-2"/>
    <property type="match status" value="1"/>
</dbReference>
<dbReference type="FunFam" id="2.40.30.10:FF:000054">
    <property type="entry name" value="Translation initiation factor IF-2"/>
    <property type="match status" value="1"/>
</dbReference>
<dbReference type="FunFam" id="3.40.50.10050:FF:000001">
    <property type="entry name" value="Translation initiation factor IF-2"/>
    <property type="match status" value="1"/>
</dbReference>
<dbReference type="FunFam" id="3.40.50.300:FF:000019">
    <property type="entry name" value="Translation initiation factor IF-2"/>
    <property type="match status" value="1"/>
</dbReference>
<dbReference type="Gene3D" id="3.40.50.300">
    <property type="entry name" value="P-loop containing nucleotide triphosphate hydrolases"/>
    <property type="match status" value="1"/>
</dbReference>
<dbReference type="Gene3D" id="2.40.30.10">
    <property type="entry name" value="Translation factors"/>
    <property type="match status" value="2"/>
</dbReference>
<dbReference type="Gene3D" id="3.40.50.10050">
    <property type="entry name" value="Translation initiation factor IF- 2, domain 3"/>
    <property type="match status" value="1"/>
</dbReference>
<dbReference type="HAMAP" id="MF_00100_B">
    <property type="entry name" value="IF_2_B"/>
    <property type="match status" value="1"/>
</dbReference>
<dbReference type="InterPro" id="IPR053905">
    <property type="entry name" value="EF-G-like_DII"/>
</dbReference>
<dbReference type="InterPro" id="IPR004161">
    <property type="entry name" value="EFTu-like_2"/>
</dbReference>
<dbReference type="InterPro" id="IPR044145">
    <property type="entry name" value="IF2_II"/>
</dbReference>
<dbReference type="InterPro" id="IPR006847">
    <property type="entry name" value="IF2_N"/>
</dbReference>
<dbReference type="InterPro" id="IPR027417">
    <property type="entry name" value="P-loop_NTPase"/>
</dbReference>
<dbReference type="InterPro" id="IPR005225">
    <property type="entry name" value="Small_GTP-bd"/>
</dbReference>
<dbReference type="InterPro" id="IPR000795">
    <property type="entry name" value="T_Tr_GTP-bd_dom"/>
</dbReference>
<dbReference type="InterPro" id="IPR000178">
    <property type="entry name" value="TF_IF2_bacterial-like"/>
</dbReference>
<dbReference type="InterPro" id="IPR015760">
    <property type="entry name" value="TIF_IF2"/>
</dbReference>
<dbReference type="InterPro" id="IPR023115">
    <property type="entry name" value="TIF_IF2_dom3"/>
</dbReference>
<dbReference type="InterPro" id="IPR036925">
    <property type="entry name" value="TIF_IF2_dom3_sf"/>
</dbReference>
<dbReference type="InterPro" id="IPR009000">
    <property type="entry name" value="Transl_B-barrel_sf"/>
</dbReference>
<dbReference type="NCBIfam" id="TIGR00487">
    <property type="entry name" value="IF-2"/>
    <property type="match status" value="1"/>
</dbReference>
<dbReference type="NCBIfam" id="TIGR00231">
    <property type="entry name" value="small_GTP"/>
    <property type="match status" value="1"/>
</dbReference>
<dbReference type="PANTHER" id="PTHR43381:SF5">
    <property type="entry name" value="TR-TYPE G DOMAIN-CONTAINING PROTEIN"/>
    <property type="match status" value="1"/>
</dbReference>
<dbReference type="PANTHER" id="PTHR43381">
    <property type="entry name" value="TRANSLATION INITIATION FACTOR IF-2-RELATED"/>
    <property type="match status" value="1"/>
</dbReference>
<dbReference type="Pfam" id="PF22042">
    <property type="entry name" value="EF-G_D2"/>
    <property type="match status" value="1"/>
</dbReference>
<dbReference type="Pfam" id="PF00009">
    <property type="entry name" value="GTP_EFTU"/>
    <property type="match status" value="1"/>
</dbReference>
<dbReference type="Pfam" id="PF03144">
    <property type="entry name" value="GTP_EFTU_D2"/>
    <property type="match status" value="1"/>
</dbReference>
<dbReference type="Pfam" id="PF11987">
    <property type="entry name" value="IF-2"/>
    <property type="match status" value="1"/>
</dbReference>
<dbReference type="Pfam" id="PF04760">
    <property type="entry name" value="IF2_N"/>
    <property type="match status" value="1"/>
</dbReference>
<dbReference type="SUPFAM" id="SSF52156">
    <property type="entry name" value="Initiation factor IF2/eIF5b, domain 3"/>
    <property type="match status" value="1"/>
</dbReference>
<dbReference type="SUPFAM" id="SSF52540">
    <property type="entry name" value="P-loop containing nucleoside triphosphate hydrolases"/>
    <property type="match status" value="1"/>
</dbReference>
<dbReference type="SUPFAM" id="SSF50447">
    <property type="entry name" value="Translation proteins"/>
    <property type="match status" value="2"/>
</dbReference>
<dbReference type="PROSITE" id="PS51722">
    <property type="entry name" value="G_TR_2"/>
    <property type="match status" value="1"/>
</dbReference>
<dbReference type="PROSITE" id="PS01176">
    <property type="entry name" value="IF2"/>
    <property type="match status" value="1"/>
</dbReference>
<gene>
    <name evidence="2" type="primary">infB</name>
    <name type="ordered locus">RC0816</name>
</gene>
<keyword id="KW-0963">Cytoplasm</keyword>
<keyword id="KW-0342">GTP-binding</keyword>
<keyword id="KW-0396">Initiation factor</keyword>
<keyword id="KW-0547">Nucleotide-binding</keyword>
<keyword id="KW-0648">Protein biosynthesis</keyword>
<sequence length="831" mass="91072">MTDNQEIKPKKLTLGNSKLSLNKSFDSLTGAQSFVNAKSKTLVEVRKSSTGSATTLSLNKERNSLDQTVIDANKEEFNRRLSILKKAAEQSQLNDPLKISTLSKLASINQSANSKIEPLETDKEVEQKQQNTEENKVEVSAKIVQDDEDIPSQIPKKKEETFVKSPLVGKRTRYGIESEKELDKTAESKIIAPKIKLEEPKKFKKADLFNMLSDDESGSGRTRSLAAIKRAREKEKRKLVSQAPEKVYREVTIPEAIGVGDLANAMSERVADVIKELMKLGILANASQTIDADTAELVATNLGHTVKRVQESDVENVLISDDKVEDLRTRAPVVTVMGHVDHGKTSLLDSLKSTDIAAGELGGITQHIGAYRVTLADGRAITFIDTPGHEAFSEMRSRGAKVTDIVIIVVAADDGIKTQTVEAINHAKAAGVPIIVAINKIDKPDIDIERVKNELYVHEIIGEEAGGDIMIIPISALKKINLDKLEEAILLIAEMQDLKANPFGSAAGVVIESKIEQGRGTLTTILVQRGTLRNSDIIIAGTAYGKVKKMTNDKGLEIVEATPSVPVEIQGLNEVPFAGDKFNVVQNEKQAKDIAEYRMRLAKEKKISIAPRSSLEDLFLKASGNSKIKELPLIIKGDVQGSVEAISGSLLKLPSDEIKLRILHSGVGPITESDVSLAHASSAIIVGFNVRAGANALTAAEKEKVDIRYYSIIYHLIDDIKAIMSGMLDPIVREQYIGSAEMRQIFNITKVGKIAGSYVTKGIIKKGAGVRLLRDNVVIHEGKLKTLKRFKDEVKEVREGYECGIAFENYQDIREGDTVEVFELIQEQRQL</sequence>
<protein>
    <recommendedName>
        <fullName evidence="2">Translation initiation factor IF-2</fullName>
    </recommendedName>
</protein>
<proteinExistence type="inferred from homology"/>
<evidence type="ECO:0000250" key="1"/>
<evidence type="ECO:0000255" key="2">
    <source>
        <dbReference type="HAMAP-Rule" id="MF_00100"/>
    </source>
</evidence>
<evidence type="ECO:0000256" key="3">
    <source>
        <dbReference type="SAM" id="MobiDB-lite"/>
    </source>
</evidence>
<comment type="function">
    <text evidence="2">One of the essential components for the initiation of protein synthesis. Protects formylmethionyl-tRNA from spontaneous hydrolysis and promotes its binding to the 30S ribosomal subunits. Also involved in the hydrolysis of GTP during the formation of the 70S ribosomal complex.</text>
</comment>
<comment type="subcellular location">
    <subcellularLocation>
        <location evidence="2">Cytoplasm</location>
    </subcellularLocation>
</comment>
<comment type="similarity">
    <text evidence="2">Belongs to the TRAFAC class translation factor GTPase superfamily. Classic translation factor GTPase family. IF-2 subfamily.</text>
</comment>
<name>IF2_RICCN</name>
<reference key="1">
    <citation type="journal article" date="2001" name="Science">
        <title>Mechanisms of evolution in Rickettsia conorii and R. prowazekii.</title>
        <authorList>
            <person name="Ogata H."/>
            <person name="Audic S."/>
            <person name="Renesto-Audiffren P."/>
            <person name="Fournier P.-E."/>
            <person name="Barbe V."/>
            <person name="Samson D."/>
            <person name="Roux V."/>
            <person name="Cossart P."/>
            <person name="Weissenbach J."/>
            <person name="Claverie J.-M."/>
            <person name="Raoult D."/>
        </authorList>
    </citation>
    <scope>NUCLEOTIDE SEQUENCE [LARGE SCALE GENOMIC DNA]</scope>
    <source>
        <strain>ATCC VR-613 / Malish 7</strain>
    </source>
</reference>
<feature type="chain" id="PRO_0000137243" description="Translation initiation factor IF-2">
    <location>
        <begin position="1"/>
        <end position="831"/>
    </location>
</feature>
<feature type="domain" description="tr-type G">
    <location>
        <begin position="329"/>
        <end position="499"/>
    </location>
</feature>
<feature type="region of interest" description="Disordered" evidence="3">
    <location>
        <begin position="116"/>
        <end position="157"/>
    </location>
</feature>
<feature type="region of interest" description="G1" evidence="1">
    <location>
        <begin position="338"/>
        <end position="345"/>
    </location>
</feature>
<feature type="region of interest" description="G2" evidence="1">
    <location>
        <begin position="363"/>
        <end position="367"/>
    </location>
</feature>
<feature type="region of interest" description="G3" evidence="1">
    <location>
        <begin position="385"/>
        <end position="388"/>
    </location>
</feature>
<feature type="region of interest" description="G4" evidence="1">
    <location>
        <begin position="439"/>
        <end position="442"/>
    </location>
</feature>
<feature type="region of interest" description="G5" evidence="1">
    <location>
        <begin position="475"/>
        <end position="477"/>
    </location>
</feature>
<feature type="compositionally biased region" description="Basic and acidic residues" evidence="3">
    <location>
        <begin position="117"/>
        <end position="139"/>
    </location>
</feature>
<feature type="binding site" evidence="2">
    <location>
        <begin position="338"/>
        <end position="345"/>
    </location>
    <ligand>
        <name>GTP</name>
        <dbReference type="ChEBI" id="CHEBI:37565"/>
    </ligand>
</feature>
<feature type="binding site" evidence="2">
    <location>
        <begin position="385"/>
        <end position="389"/>
    </location>
    <ligand>
        <name>GTP</name>
        <dbReference type="ChEBI" id="CHEBI:37565"/>
    </ligand>
</feature>
<feature type="binding site" evidence="2">
    <location>
        <begin position="439"/>
        <end position="442"/>
    </location>
    <ligand>
        <name>GTP</name>
        <dbReference type="ChEBI" id="CHEBI:37565"/>
    </ligand>
</feature>